<evidence type="ECO:0000255" key="1">
    <source>
        <dbReference type="HAMAP-Rule" id="MF_01187"/>
    </source>
</evidence>
<sequence>MDARLLEILVCPICKGPLHYDRGAQELVCHADKLAYPIRDGIPVMLVDEARQTVEGTPVDPAGPARGR</sequence>
<keyword id="KW-1185">Reference proteome</keyword>
<gene>
    <name type="ordered locus">BMA2274</name>
</gene>
<name>Y2274_BURMA</name>
<organism>
    <name type="scientific">Burkholderia mallei (strain ATCC 23344)</name>
    <dbReference type="NCBI Taxonomy" id="243160"/>
    <lineage>
        <taxon>Bacteria</taxon>
        <taxon>Pseudomonadati</taxon>
        <taxon>Pseudomonadota</taxon>
        <taxon>Betaproteobacteria</taxon>
        <taxon>Burkholderiales</taxon>
        <taxon>Burkholderiaceae</taxon>
        <taxon>Burkholderia</taxon>
        <taxon>pseudomallei group</taxon>
    </lineage>
</organism>
<reference key="1">
    <citation type="journal article" date="2004" name="Proc. Natl. Acad. Sci. U.S.A.">
        <title>Structural flexibility in the Burkholderia mallei genome.</title>
        <authorList>
            <person name="Nierman W.C."/>
            <person name="DeShazer D."/>
            <person name="Kim H.S."/>
            <person name="Tettelin H."/>
            <person name="Nelson K.E."/>
            <person name="Feldblyum T.V."/>
            <person name="Ulrich R.L."/>
            <person name="Ronning C.M."/>
            <person name="Brinkac L.M."/>
            <person name="Daugherty S.C."/>
            <person name="Davidsen T.D."/>
            <person name="DeBoy R.T."/>
            <person name="Dimitrov G."/>
            <person name="Dodson R.J."/>
            <person name="Durkin A.S."/>
            <person name="Gwinn M.L."/>
            <person name="Haft D.H."/>
            <person name="Khouri H.M."/>
            <person name="Kolonay J.F."/>
            <person name="Madupu R."/>
            <person name="Mohammoud Y."/>
            <person name="Nelson W.C."/>
            <person name="Radune D."/>
            <person name="Romero C.M."/>
            <person name="Sarria S."/>
            <person name="Selengut J."/>
            <person name="Shamblin C."/>
            <person name="Sullivan S.A."/>
            <person name="White O."/>
            <person name="Yu Y."/>
            <person name="Zafar N."/>
            <person name="Zhou L."/>
            <person name="Fraser C.M."/>
        </authorList>
    </citation>
    <scope>NUCLEOTIDE SEQUENCE [LARGE SCALE GENOMIC DNA]</scope>
    <source>
        <strain>ATCC 23344</strain>
    </source>
</reference>
<accession>Q62HI3</accession>
<dbReference type="EMBL" id="CP000010">
    <property type="protein sequence ID" value="AAU49876.1"/>
    <property type="molecule type" value="Genomic_DNA"/>
</dbReference>
<dbReference type="RefSeq" id="WP_004196455.1">
    <property type="nucleotide sequence ID" value="NC_006348.1"/>
</dbReference>
<dbReference type="RefSeq" id="YP_103837.1">
    <property type="nucleotide sequence ID" value="NC_006348.1"/>
</dbReference>
<dbReference type="SMR" id="Q62HI3"/>
<dbReference type="KEGG" id="bma:BMA2274"/>
<dbReference type="PATRIC" id="fig|243160.12.peg.2342"/>
<dbReference type="eggNOG" id="COG2835">
    <property type="taxonomic scope" value="Bacteria"/>
</dbReference>
<dbReference type="HOGENOM" id="CLU_155659_3_0_4"/>
<dbReference type="Proteomes" id="UP000006693">
    <property type="component" value="Chromosome 1"/>
</dbReference>
<dbReference type="GO" id="GO:0005829">
    <property type="term" value="C:cytosol"/>
    <property type="evidence" value="ECO:0007669"/>
    <property type="project" value="TreeGrafter"/>
</dbReference>
<dbReference type="FunFam" id="2.20.25.10:FF:000002">
    <property type="entry name" value="UPF0434 protein YcaR"/>
    <property type="match status" value="1"/>
</dbReference>
<dbReference type="Gene3D" id="2.20.25.10">
    <property type="match status" value="1"/>
</dbReference>
<dbReference type="HAMAP" id="MF_01187">
    <property type="entry name" value="UPF0434"/>
    <property type="match status" value="1"/>
</dbReference>
<dbReference type="InterPro" id="IPR005651">
    <property type="entry name" value="Trm112-like"/>
</dbReference>
<dbReference type="NCBIfam" id="TIGR01053">
    <property type="entry name" value="LSD1"/>
    <property type="match status" value="1"/>
</dbReference>
<dbReference type="PANTHER" id="PTHR33505:SF4">
    <property type="entry name" value="PROTEIN PREY, MITOCHONDRIAL"/>
    <property type="match status" value="1"/>
</dbReference>
<dbReference type="PANTHER" id="PTHR33505">
    <property type="entry name" value="ZGC:162634"/>
    <property type="match status" value="1"/>
</dbReference>
<dbReference type="Pfam" id="PF03966">
    <property type="entry name" value="Trm112p"/>
    <property type="match status" value="1"/>
</dbReference>
<dbReference type="SUPFAM" id="SSF158997">
    <property type="entry name" value="Trm112p-like"/>
    <property type="match status" value="1"/>
</dbReference>
<protein>
    <recommendedName>
        <fullName evidence="1">UPF0434 protein BMA2274</fullName>
    </recommendedName>
</protein>
<comment type="similarity">
    <text evidence="1">Belongs to the UPF0434 family.</text>
</comment>
<feature type="chain" id="PRO_0000291074" description="UPF0434 protein BMA2274">
    <location>
        <begin position="1"/>
        <end position="68"/>
    </location>
</feature>
<proteinExistence type="inferred from homology"/>